<sequence>MRNIHATAVIGSGAVLGEGVEIGPYTVIEDDVVIGDRTVIGPHVHIADGARIGNECRISTGAVLATAPQDLKYAGEKTYLHIGDRTVIRECVTLNRGTKASGKTVVGSDNLIMAYVHAGHDCVIGNHVVIANSVQFGGHCHVGDYVVVGGLAGVHQXVRIGRYAMVGGISRAALDVPPFVMAGGHASFRYEGLNVIGLKRRGFTSEQLGNIRDAYRIIFQSGLLLSKALEAVRNDLPQTPEVVEILDFFASGVYNRKFLKPFNS</sequence>
<gene>
    <name evidence="1" type="primary">lpxA</name>
    <name type="ordered locus">CT2008</name>
</gene>
<feature type="chain" id="PRO_0000188043" description="Acyl-[acyl-carrier-protein]--UDP-N-acetylglucosamine O-acyltransferase">
    <location>
        <begin position="1"/>
        <end position="264"/>
    </location>
</feature>
<proteinExistence type="inferred from homology"/>
<organism>
    <name type="scientific">Chlorobaculum tepidum (strain ATCC 49652 / DSM 12025 / NBRC 103806 / TLS)</name>
    <name type="common">Chlorobium tepidum</name>
    <dbReference type="NCBI Taxonomy" id="194439"/>
    <lineage>
        <taxon>Bacteria</taxon>
        <taxon>Pseudomonadati</taxon>
        <taxon>Chlorobiota</taxon>
        <taxon>Chlorobiia</taxon>
        <taxon>Chlorobiales</taxon>
        <taxon>Chlorobiaceae</taxon>
        <taxon>Chlorobaculum</taxon>
    </lineage>
</organism>
<protein>
    <recommendedName>
        <fullName evidence="1">Acyl-[acyl-carrier-protein]--UDP-N-acetylglucosamine O-acyltransferase</fullName>
        <shortName evidence="1">UDP-N-acetylglucosamine acyltransferase</shortName>
        <ecNumber evidence="1">2.3.1.129</ecNumber>
    </recommendedName>
</protein>
<comment type="function">
    <text evidence="1">Involved in the biosynthesis of lipid A, a phosphorylated glycolipid that anchors the lipopolysaccharide to the outer membrane of the cell.</text>
</comment>
<comment type="catalytic activity">
    <reaction evidence="1">
        <text>a (3R)-hydroxyacyl-[ACP] + UDP-N-acetyl-alpha-D-glucosamine = a UDP-3-O-[(3R)-3-hydroxyacyl]-N-acetyl-alpha-D-glucosamine + holo-[ACP]</text>
        <dbReference type="Rhea" id="RHEA:67812"/>
        <dbReference type="Rhea" id="RHEA-COMP:9685"/>
        <dbReference type="Rhea" id="RHEA-COMP:9945"/>
        <dbReference type="ChEBI" id="CHEBI:57705"/>
        <dbReference type="ChEBI" id="CHEBI:64479"/>
        <dbReference type="ChEBI" id="CHEBI:78827"/>
        <dbReference type="ChEBI" id="CHEBI:173225"/>
        <dbReference type="EC" id="2.3.1.129"/>
    </reaction>
</comment>
<comment type="pathway">
    <text evidence="1">Glycolipid biosynthesis; lipid IV(A) biosynthesis; lipid IV(A) from (3R)-3-hydroxytetradecanoyl-[acyl-carrier-protein] and UDP-N-acetyl-alpha-D-glucosamine: step 1/6.</text>
</comment>
<comment type="subunit">
    <text evidence="1">Homotrimer.</text>
</comment>
<comment type="subcellular location">
    <subcellularLocation>
        <location evidence="1">Cytoplasm</location>
    </subcellularLocation>
</comment>
<comment type="similarity">
    <text evidence="1">Belongs to the transferase hexapeptide repeat family. LpxA subfamily.</text>
</comment>
<evidence type="ECO:0000255" key="1">
    <source>
        <dbReference type="HAMAP-Rule" id="MF_00387"/>
    </source>
</evidence>
<dbReference type="EC" id="2.3.1.129" evidence="1"/>
<dbReference type="EMBL" id="AE006470">
    <property type="protein sequence ID" value="AAM73226.1"/>
    <property type="molecule type" value="Genomic_DNA"/>
</dbReference>
<dbReference type="RefSeq" id="NP_662884.1">
    <property type="nucleotide sequence ID" value="NC_002932.3"/>
</dbReference>
<dbReference type="RefSeq" id="WP_010933664.1">
    <property type="nucleotide sequence ID" value="NC_002932.3"/>
</dbReference>
<dbReference type="STRING" id="194439.CT2008"/>
<dbReference type="EnsemblBacteria" id="AAM73226">
    <property type="protein sequence ID" value="AAM73226"/>
    <property type="gene ID" value="CT2008"/>
</dbReference>
<dbReference type="KEGG" id="cte:CT2008"/>
<dbReference type="PATRIC" id="fig|194439.7.peg.1818"/>
<dbReference type="eggNOG" id="COG1043">
    <property type="taxonomic scope" value="Bacteria"/>
</dbReference>
<dbReference type="HOGENOM" id="CLU_061249_0_0_10"/>
<dbReference type="OrthoDB" id="9807278at2"/>
<dbReference type="UniPathway" id="UPA00359">
    <property type="reaction ID" value="UER00477"/>
</dbReference>
<dbReference type="Proteomes" id="UP000001007">
    <property type="component" value="Chromosome"/>
</dbReference>
<dbReference type="GO" id="GO:0005737">
    <property type="term" value="C:cytoplasm"/>
    <property type="evidence" value="ECO:0007669"/>
    <property type="project" value="UniProtKB-SubCell"/>
</dbReference>
<dbReference type="GO" id="GO:0016020">
    <property type="term" value="C:membrane"/>
    <property type="evidence" value="ECO:0007669"/>
    <property type="project" value="GOC"/>
</dbReference>
<dbReference type="GO" id="GO:0008780">
    <property type="term" value="F:acyl-[acyl-carrier-protein]-UDP-N-acetylglucosamine O-acyltransferase activity"/>
    <property type="evidence" value="ECO:0007669"/>
    <property type="project" value="UniProtKB-UniRule"/>
</dbReference>
<dbReference type="GO" id="GO:0009245">
    <property type="term" value="P:lipid A biosynthetic process"/>
    <property type="evidence" value="ECO:0007669"/>
    <property type="project" value="UniProtKB-UniRule"/>
</dbReference>
<dbReference type="CDD" id="cd03351">
    <property type="entry name" value="LbH_UDP-GlcNAc_AT"/>
    <property type="match status" value="1"/>
</dbReference>
<dbReference type="Gene3D" id="2.160.10.10">
    <property type="entry name" value="Hexapeptide repeat proteins"/>
    <property type="match status" value="1"/>
</dbReference>
<dbReference type="Gene3D" id="1.20.1180.10">
    <property type="entry name" value="Udp N-acetylglucosamine O-acyltransferase, C-terminal domain"/>
    <property type="match status" value="1"/>
</dbReference>
<dbReference type="HAMAP" id="MF_00387">
    <property type="entry name" value="LpxA"/>
    <property type="match status" value="1"/>
</dbReference>
<dbReference type="InterPro" id="IPR029098">
    <property type="entry name" value="Acetyltransf_C"/>
</dbReference>
<dbReference type="InterPro" id="IPR037157">
    <property type="entry name" value="Acetyltransf_C_sf"/>
</dbReference>
<dbReference type="InterPro" id="IPR001451">
    <property type="entry name" value="Hexapep"/>
</dbReference>
<dbReference type="InterPro" id="IPR010137">
    <property type="entry name" value="Lipid_A_LpxA"/>
</dbReference>
<dbReference type="InterPro" id="IPR011004">
    <property type="entry name" value="Trimer_LpxA-like_sf"/>
</dbReference>
<dbReference type="NCBIfam" id="TIGR01852">
    <property type="entry name" value="lipid_A_lpxA"/>
    <property type="match status" value="1"/>
</dbReference>
<dbReference type="NCBIfam" id="NF003657">
    <property type="entry name" value="PRK05289.1"/>
    <property type="match status" value="1"/>
</dbReference>
<dbReference type="PANTHER" id="PTHR43480">
    <property type="entry name" value="ACYL-[ACYL-CARRIER-PROTEIN]--UDP-N-ACETYLGLUCOSAMINE O-ACYLTRANSFERASE"/>
    <property type="match status" value="1"/>
</dbReference>
<dbReference type="PANTHER" id="PTHR43480:SF1">
    <property type="entry name" value="ACYL-[ACYL-CARRIER-PROTEIN]--UDP-N-ACETYLGLUCOSAMINE O-ACYLTRANSFERASE, MITOCHONDRIAL-RELATED"/>
    <property type="match status" value="1"/>
</dbReference>
<dbReference type="Pfam" id="PF13720">
    <property type="entry name" value="Acetyltransf_11"/>
    <property type="match status" value="1"/>
</dbReference>
<dbReference type="Pfam" id="PF00132">
    <property type="entry name" value="Hexapep"/>
    <property type="match status" value="2"/>
</dbReference>
<dbReference type="PIRSF" id="PIRSF000456">
    <property type="entry name" value="UDP-GlcNAc_acltr"/>
    <property type="match status" value="1"/>
</dbReference>
<dbReference type="SUPFAM" id="SSF51161">
    <property type="entry name" value="Trimeric LpxA-like enzymes"/>
    <property type="match status" value="1"/>
</dbReference>
<keyword id="KW-0012">Acyltransferase</keyword>
<keyword id="KW-0963">Cytoplasm</keyword>
<keyword id="KW-0441">Lipid A biosynthesis</keyword>
<keyword id="KW-0444">Lipid biosynthesis</keyword>
<keyword id="KW-0443">Lipid metabolism</keyword>
<keyword id="KW-1185">Reference proteome</keyword>
<keyword id="KW-0677">Repeat</keyword>
<keyword id="KW-0808">Transferase</keyword>
<accession>Q8KAZ0</accession>
<reference key="1">
    <citation type="journal article" date="2002" name="Proc. Natl. Acad. Sci. U.S.A.">
        <title>The complete genome sequence of Chlorobium tepidum TLS, a photosynthetic, anaerobic, green-sulfur bacterium.</title>
        <authorList>
            <person name="Eisen J.A."/>
            <person name="Nelson K.E."/>
            <person name="Paulsen I.T."/>
            <person name="Heidelberg J.F."/>
            <person name="Wu M."/>
            <person name="Dodson R.J."/>
            <person name="DeBoy R.T."/>
            <person name="Gwinn M.L."/>
            <person name="Nelson W.C."/>
            <person name="Haft D.H."/>
            <person name="Hickey E.K."/>
            <person name="Peterson J.D."/>
            <person name="Durkin A.S."/>
            <person name="Kolonay J.F."/>
            <person name="Yang F."/>
            <person name="Holt I.E."/>
            <person name="Umayam L.A."/>
            <person name="Mason T.M."/>
            <person name="Brenner M."/>
            <person name="Shea T.P."/>
            <person name="Parksey D.S."/>
            <person name="Nierman W.C."/>
            <person name="Feldblyum T.V."/>
            <person name="Hansen C.L."/>
            <person name="Craven M.B."/>
            <person name="Radune D."/>
            <person name="Vamathevan J.J."/>
            <person name="Khouri H.M."/>
            <person name="White O."/>
            <person name="Gruber T.M."/>
            <person name="Ketchum K.A."/>
            <person name="Venter J.C."/>
            <person name="Tettelin H."/>
            <person name="Bryant D.A."/>
            <person name="Fraser C.M."/>
        </authorList>
    </citation>
    <scope>NUCLEOTIDE SEQUENCE [LARGE SCALE GENOMIC DNA]</scope>
    <source>
        <strain>ATCC 49652 / DSM 12025 / NBRC 103806 / TLS</strain>
    </source>
</reference>
<name>LPXA_CHLTE</name>